<keyword id="KW-0414">Isoprene biosynthesis</keyword>
<keyword id="KW-0460">Magnesium</keyword>
<keyword id="KW-0479">Metal-binding</keyword>
<keyword id="KW-0784">Thiamine biosynthesis</keyword>
<keyword id="KW-0786">Thiamine pyrophosphate</keyword>
<keyword id="KW-0808">Transferase</keyword>
<gene>
    <name evidence="1" type="primary">dxs</name>
    <name type="ordered locus">Shew185_1343</name>
</gene>
<evidence type="ECO:0000255" key="1">
    <source>
        <dbReference type="HAMAP-Rule" id="MF_00315"/>
    </source>
</evidence>
<comment type="function">
    <text evidence="1">Catalyzes the acyloin condensation reaction between C atoms 2 and 3 of pyruvate and glyceraldehyde 3-phosphate to yield 1-deoxy-D-xylulose-5-phosphate (DXP).</text>
</comment>
<comment type="catalytic activity">
    <reaction evidence="1">
        <text>D-glyceraldehyde 3-phosphate + pyruvate + H(+) = 1-deoxy-D-xylulose 5-phosphate + CO2</text>
        <dbReference type="Rhea" id="RHEA:12605"/>
        <dbReference type="ChEBI" id="CHEBI:15361"/>
        <dbReference type="ChEBI" id="CHEBI:15378"/>
        <dbReference type="ChEBI" id="CHEBI:16526"/>
        <dbReference type="ChEBI" id="CHEBI:57792"/>
        <dbReference type="ChEBI" id="CHEBI:59776"/>
        <dbReference type="EC" id="2.2.1.7"/>
    </reaction>
</comment>
<comment type="cofactor">
    <cofactor evidence="1">
        <name>Mg(2+)</name>
        <dbReference type="ChEBI" id="CHEBI:18420"/>
    </cofactor>
    <text evidence="1">Binds 1 Mg(2+) ion per subunit.</text>
</comment>
<comment type="cofactor">
    <cofactor evidence="1">
        <name>thiamine diphosphate</name>
        <dbReference type="ChEBI" id="CHEBI:58937"/>
    </cofactor>
    <text evidence="1">Binds 1 thiamine pyrophosphate per subunit.</text>
</comment>
<comment type="pathway">
    <text evidence="1">Metabolic intermediate biosynthesis; 1-deoxy-D-xylulose 5-phosphate biosynthesis; 1-deoxy-D-xylulose 5-phosphate from D-glyceraldehyde 3-phosphate and pyruvate: step 1/1.</text>
</comment>
<comment type="subunit">
    <text evidence="1">Homodimer.</text>
</comment>
<comment type="similarity">
    <text evidence="1">Belongs to the transketolase family. DXPS subfamily.</text>
</comment>
<accession>A6WL04</accession>
<feature type="chain" id="PRO_1000019074" description="1-deoxy-D-xylulose-5-phosphate synthase">
    <location>
        <begin position="1"/>
        <end position="622"/>
    </location>
</feature>
<feature type="binding site" evidence="1">
    <location>
        <position position="80"/>
    </location>
    <ligand>
        <name>thiamine diphosphate</name>
        <dbReference type="ChEBI" id="CHEBI:58937"/>
    </ligand>
</feature>
<feature type="binding site" evidence="1">
    <location>
        <begin position="121"/>
        <end position="123"/>
    </location>
    <ligand>
        <name>thiamine diphosphate</name>
        <dbReference type="ChEBI" id="CHEBI:58937"/>
    </ligand>
</feature>
<feature type="binding site" evidence="1">
    <location>
        <position position="152"/>
    </location>
    <ligand>
        <name>Mg(2+)</name>
        <dbReference type="ChEBI" id="CHEBI:18420"/>
    </ligand>
</feature>
<feature type="binding site" evidence="1">
    <location>
        <begin position="153"/>
        <end position="154"/>
    </location>
    <ligand>
        <name>thiamine diphosphate</name>
        <dbReference type="ChEBI" id="CHEBI:58937"/>
    </ligand>
</feature>
<feature type="binding site" evidence="1">
    <location>
        <position position="181"/>
    </location>
    <ligand>
        <name>Mg(2+)</name>
        <dbReference type="ChEBI" id="CHEBI:18420"/>
    </ligand>
</feature>
<feature type="binding site" evidence="1">
    <location>
        <position position="181"/>
    </location>
    <ligand>
        <name>thiamine diphosphate</name>
        <dbReference type="ChEBI" id="CHEBI:58937"/>
    </ligand>
</feature>
<feature type="binding site" evidence="1">
    <location>
        <position position="288"/>
    </location>
    <ligand>
        <name>thiamine diphosphate</name>
        <dbReference type="ChEBI" id="CHEBI:58937"/>
    </ligand>
</feature>
<feature type="binding site" evidence="1">
    <location>
        <position position="370"/>
    </location>
    <ligand>
        <name>thiamine diphosphate</name>
        <dbReference type="ChEBI" id="CHEBI:58937"/>
    </ligand>
</feature>
<sequence length="622" mass="68021">MSLDISQFPVLAQANTPNELRQLPQALLPQVADELREFLLKSVGISSGHFASGLGTVELTVALHYVYNTPFDRLIWDVGHQAYPHKILTGRRDKMHTIRQKDGLHPFPWREESEYDTFSVGHSGTSISAALAMAIAAEKEQAGRKVVAVIGDGAMTGGMVFEAMNHAGDLHNDMLVVLNDNEMSISENVGALNNHLAQLMSGRFYTTLREGGKKVLKGMPVIKEMAKRTEEHLKGMVVPGTLFEELGFNYIGPIDGHDVDALVETMRNMRNLKGPQVLHIMTKKGRGYEPAEKDPIGWHAVPKFDPSLFKKPATKPGLPTFSQVFGKWLCDIAEQDEKVLAITPAMREGSGMVEFSQRFPKQYFDAAIAEQHAVTLSAGFACEGFKPVVAIYSTFLQRAYDQLIHDVALQQLPVLFAIDRGGIVGADGPTHQGAFDLSFMRCIPNMVIMAPSDENECRQMLYTGYCYDAGPSAVRYPRGCATGATQVEAMTALPIGKGVIKRVGKRIAILNFGTLLASALTAAESLDATVVDMRFVKPLDVDLVKEMAQTHEVLVTVEENAIMGGAGAGVLEQLQKLRMPKAVLQIGLPDEFIKHGSPEEVTHDLQLDAEGILAQINAYLAQ</sequence>
<organism>
    <name type="scientific">Shewanella baltica (strain OS185)</name>
    <dbReference type="NCBI Taxonomy" id="402882"/>
    <lineage>
        <taxon>Bacteria</taxon>
        <taxon>Pseudomonadati</taxon>
        <taxon>Pseudomonadota</taxon>
        <taxon>Gammaproteobacteria</taxon>
        <taxon>Alteromonadales</taxon>
        <taxon>Shewanellaceae</taxon>
        <taxon>Shewanella</taxon>
    </lineage>
</organism>
<protein>
    <recommendedName>
        <fullName evidence="1">1-deoxy-D-xylulose-5-phosphate synthase</fullName>
        <ecNumber evidence="1">2.2.1.7</ecNumber>
    </recommendedName>
    <alternativeName>
        <fullName evidence="1">1-deoxyxylulose-5-phosphate synthase</fullName>
        <shortName evidence="1">DXP synthase</shortName>
        <shortName evidence="1">DXPS</shortName>
    </alternativeName>
</protein>
<proteinExistence type="inferred from homology"/>
<name>DXS_SHEB8</name>
<dbReference type="EC" id="2.2.1.7" evidence="1"/>
<dbReference type="EMBL" id="CP000753">
    <property type="protein sequence ID" value="ABS07493.1"/>
    <property type="molecule type" value="Genomic_DNA"/>
</dbReference>
<dbReference type="RefSeq" id="WP_006080882.1">
    <property type="nucleotide sequence ID" value="NC_009665.1"/>
</dbReference>
<dbReference type="SMR" id="A6WL04"/>
<dbReference type="KEGG" id="sbm:Shew185_1343"/>
<dbReference type="HOGENOM" id="CLU_009227_1_4_6"/>
<dbReference type="UniPathway" id="UPA00064">
    <property type="reaction ID" value="UER00091"/>
</dbReference>
<dbReference type="GO" id="GO:0005829">
    <property type="term" value="C:cytosol"/>
    <property type="evidence" value="ECO:0007669"/>
    <property type="project" value="TreeGrafter"/>
</dbReference>
<dbReference type="GO" id="GO:0008661">
    <property type="term" value="F:1-deoxy-D-xylulose-5-phosphate synthase activity"/>
    <property type="evidence" value="ECO:0007669"/>
    <property type="project" value="UniProtKB-UniRule"/>
</dbReference>
<dbReference type="GO" id="GO:0000287">
    <property type="term" value="F:magnesium ion binding"/>
    <property type="evidence" value="ECO:0007669"/>
    <property type="project" value="UniProtKB-UniRule"/>
</dbReference>
<dbReference type="GO" id="GO:0030976">
    <property type="term" value="F:thiamine pyrophosphate binding"/>
    <property type="evidence" value="ECO:0007669"/>
    <property type="project" value="UniProtKB-UniRule"/>
</dbReference>
<dbReference type="GO" id="GO:0052865">
    <property type="term" value="P:1-deoxy-D-xylulose 5-phosphate biosynthetic process"/>
    <property type="evidence" value="ECO:0007669"/>
    <property type="project" value="UniProtKB-UniPathway"/>
</dbReference>
<dbReference type="GO" id="GO:0019288">
    <property type="term" value="P:isopentenyl diphosphate biosynthetic process, methylerythritol 4-phosphate pathway"/>
    <property type="evidence" value="ECO:0007669"/>
    <property type="project" value="TreeGrafter"/>
</dbReference>
<dbReference type="GO" id="GO:0016114">
    <property type="term" value="P:terpenoid biosynthetic process"/>
    <property type="evidence" value="ECO:0007669"/>
    <property type="project" value="UniProtKB-UniRule"/>
</dbReference>
<dbReference type="GO" id="GO:0009228">
    <property type="term" value="P:thiamine biosynthetic process"/>
    <property type="evidence" value="ECO:0007669"/>
    <property type="project" value="UniProtKB-UniRule"/>
</dbReference>
<dbReference type="CDD" id="cd02007">
    <property type="entry name" value="TPP_DXS"/>
    <property type="match status" value="1"/>
</dbReference>
<dbReference type="CDD" id="cd07033">
    <property type="entry name" value="TPP_PYR_DXS_TK_like"/>
    <property type="match status" value="1"/>
</dbReference>
<dbReference type="FunFam" id="3.40.50.920:FF:000002">
    <property type="entry name" value="1-deoxy-D-xylulose-5-phosphate synthase"/>
    <property type="match status" value="1"/>
</dbReference>
<dbReference type="FunFam" id="3.40.50.970:FF:000005">
    <property type="entry name" value="1-deoxy-D-xylulose-5-phosphate synthase"/>
    <property type="match status" value="1"/>
</dbReference>
<dbReference type="Gene3D" id="3.40.50.920">
    <property type="match status" value="1"/>
</dbReference>
<dbReference type="Gene3D" id="3.40.50.970">
    <property type="match status" value="2"/>
</dbReference>
<dbReference type="HAMAP" id="MF_00315">
    <property type="entry name" value="DXP_synth"/>
    <property type="match status" value="1"/>
</dbReference>
<dbReference type="InterPro" id="IPR005477">
    <property type="entry name" value="Dxylulose-5-P_synthase"/>
</dbReference>
<dbReference type="InterPro" id="IPR029061">
    <property type="entry name" value="THDP-binding"/>
</dbReference>
<dbReference type="InterPro" id="IPR009014">
    <property type="entry name" value="Transketo_C/PFOR_II"/>
</dbReference>
<dbReference type="InterPro" id="IPR005475">
    <property type="entry name" value="Transketolase-like_Pyr-bd"/>
</dbReference>
<dbReference type="InterPro" id="IPR020826">
    <property type="entry name" value="Transketolase_BS"/>
</dbReference>
<dbReference type="InterPro" id="IPR033248">
    <property type="entry name" value="Transketolase_C"/>
</dbReference>
<dbReference type="InterPro" id="IPR049557">
    <property type="entry name" value="Transketolase_CS"/>
</dbReference>
<dbReference type="NCBIfam" id="TIGR00204">
    <property type="entry name" value="dxs"/>
    <property type="match status" value="1"/>
</dbReference>
<dbReference type="NCBIfam" id="NF003933">
    <property type="entry name" value="PRK05444.2-2"/>
    <property type="match status" value="1"/>
</dbReference>
<dbReference type="PANTHER" id="PTHR43322">
    <property type="entry name" value="1-D-DEOXYXYLULOSE 5-PHOSPHATE SYNTHASE-RELATED"/>
    <property type="match status" value="1"/>
</dbReference>
<dbReference type="PANTHER" id="PTHR43322:SF5">
    <property type="entry name" value="1-DEOXY-D-XYLULOSE-5-PHOSPHATE SYNTHASE, CHLOROPLASTIC"/>
    <property type="match status" value="1"/>
</dbReference>
<dbReference type="Pfam" id="PF13292">
    <property type="entry name" value="DXP_synthase_N"/>
    <property type="match status" value="1"/>
</dbReference>
<dbReference type="Pfam" id="PF02779">
    <property type="entry name" value="Transket_pyr"/>
    <property type="match status" value="1"/>
</dbReference>
<dbReference type="Pfam" id="PF02780">
    <property type="entry name" value="Transketolase_C"/>
    <property type="match status" value="1"/>
</dbReference>
<dbReference type="SMART" id="SM00861">
    <property type="entry name" value="Transket_pyr"/>
    <property type="match status" value="1"/>
</dbReference>
<dbReference type="SUPFAM" id="SSF52518">
    <property type="entry name" value="Thiamin diphosphate-binding fold (THDP-binding)"/>
    <property type="match status" value="2"/>
</dbReference>
<dbReference type="SUPFAM" id="SSF52922">
    <property type="entry name" value="TK C-terminal domain-like"/>
    <property type="match status" value="1"/>
</dbReference>
<dbReference type="PROSITE" id="PS00801">
    <property type="entry name" value="TRANSKETOLASE_1"/>
    <property type="match status" value="1"/>
</dbReference>
<dbReference type="PROSITE" id="PS00802">
    <property type="entry name" value="TRANSKETOLASE_2"/>
    <property type="match status" value="1"/>
</dbReference>
<reference key="1">
    <citation type="submission" date="2007-07" db="EMBL/GenBank/DDBJ databases">
        <title>Complete sequence of chromosome of Shewanella baltica OS185.</title>
        <authorList>
            <consortium name="US DOE Joint Genome Institute"/>
            <person name="Copeland A."/>
            <person name="Lucas S."/>
            <person name="Lapidus A."/>
            <person name="Barry K."/>
            <person name="Glavina del Rio T."/>
            <person name="Dalin E."/>
            <person name="Tice H."/>
            <person name="Pitluck S."/>
            <person name="Sims D."/>
            <person name="Brettin T."/>
            <person name="Bruce D."/>
            <person name="Detter J.C."/>
            <person name="Han C."/>
            <person name="Schmutz J."/>
            <person name="Larimer F."/>
            <person name="Land M."/>
            <person name="Hauser L."/>
            <person name="Kyrpides N."/>
            <person name="Mikhailova N."/>
            <person name="Brettar I."/>
            <person name="Rodrigues J."/>
            <person name="Konstantinidis K."/>
            <person name="Tiedje J."/>
            <person name="Richardson P."/>
        </authorList>
    </citation>
    <scope>NUCLEOTIDE SEQUENCE [LARGE SCALE GENOMIC DNA]</scope>
    <source>
        <strain>OS185</strain>
    </source>
</reference>